<organism>
    <name type="scientific">Actinobacillus pleuropneumoniae serotype 5b (strain L20)</name>
    <dbReference type="NCBI Taxonomy" id="416269"/>
    <lineage>
        <taxon>Bacteria</taxon>
        <taxon>Pseudomonadati</taxon>
        <taxon>Pseudomonadota</taxon>
        <taxon>Gammaproteobacteria</taxon>
        <taxon>Pasteurellales</taxon>
        <taxon>Pasteurellaceae</taxon>
        <taxon>Actinobacillus</taxon>
    </lineage>
</organism>
<protein>
    <recommendedName>
        <fullName evidence="1">Small ribosomal subunit protein bS16</fullName>
    </recommendedName>
    <alternativeName>
        <fullName evidence="2">30S ribosomal protein S16</fullName>
    </alternativeName>
</protein>
<name>RS16_ACTP2</name>
<comment type="similarity">
    <text evidence="1">Belongs to the bacterial ribosomal protein bS16 family.</text>
</comment>
<dbReference type="EMBL" id="CP000569">
    <property type="protein sequence ID" value="ABN74870.1"/>
    <property type="molecule type" value="Genomic_DNA"/>
</dbReference>
<dbReference type="RefSeq" id="WP_005599334.1">
    <property type="nucleotide sequence ID" value="NC_009053.1"/>
</dbReference>
<dbReference type="SMR" id="A3N384"/>
<dbReference type="STRING" id="416269.APL_1786"/>
<dbReference type="EnsemblBacteria" id="ABN74870">
    <property type="protein sequence ID" value="ABN74870"/>
    <property type="gene ID" value="APL_1786"/>
</dbReference>
<dbReference type="GeneID" id="48600079"/>
<dbReference type="KEGG" id="apl:APL_1786"/>
<dbReference type="eggNOG" id="COG0228">
    <property type="taxonomic scope" value="Bacteria"/>
</dbReference>
<dbReference type="HOGENOM" id="CLU_100590_5_1_6"/>
<dbReference type="Proteomes" id="UP000001432">
    <property type="component" value="Chromosome"/>
</dbReference>
<dbReference type="GO" id="GO:0005737">
    <property type="term" value="C:cytoplasm"/>
    <property type="evidence" value="ECO:0007669"/>
    <property type="project" value="UniProtKB-ARBA"/>
</dbReference>
<dbReference type="GO" id="GO:0015935">
    <property type="term" value="C:small ribosomal subunit"/>
    <property type="evidence" value="ECO:0007669"/>
    <property type="project" value="TreeGrafter"/>
</dbReference>
<dbReference type="GO" id="GO:0003735">
    <property type="term" value="F:structural constituent of ribosome"/>
    <property type="evidence" value="ECO:0007669"/>
    <property type="project" value="InterPro"/>
</dbReference>
<dbReference type="GO" id="GO:0006412">
    <property type="term" value="P:translation"/>
    <property type="evidence" value="ECO:0007669"/>
    <property type="project" value="UniProtKB-UniRule"/>
</dbReference>
<dbReference type="FunFam" id="3.30.1320.10:FF:000001">
    <property type="entry name" value="30S ribosomal protein S16"/>
    <property type="match status" value="1"/>
</dbReference>
<dbReference type="Gene3D" id="3.30.1320.10">
    <property type="match status" value="1"/>
</dbReference>
<dbReference type="HAMAP" id="MF_00385">
    <property type="entry name" value="Ribosomal_bS16"/>
    <property type="match status" value="1"/>
</dbReference>
<dbReference type="InterPro" id="IPR000307">
    <property type="entry name" value="Ribosomal_bS16"/>
</dbReference>
<dbReference type="InterPro" id="IPR020592">
    <property type="entry name" value="Ribosomal_bS16_CS"/>
</dbReference>
<dbReference type="InterPro" id="IPR023803">
    <property type="entry name" value="Ribosomal_bS16_dom_sf"/>
</dbReference>
<dbReference type="NCBIfam" id="TIGR00002">
    <property type="entry name" value="S16"/>
    <property type="match status" value="1"/>
</dbReference>
<dbReference type="PANTHER" id="PTHR12919">
    <property type="entry name" value="30S RIBOSOMAL PROTEIN S16"/>
    <property type="match status" value="1"/>
</dbReference>
<dbReference type="PANTHER" id="PTHR12919:SF20">
    <property type="entry name" value="SMALL RIBOSOMAL SUBUNIT PROTEIN BS16M"/>
    <property type="match status" value="1"/>
</dbReference>
<dbReference type="Pfam" id="PF00886">
    <property type="entry name" value="Ribosomal_S16"/>
    <property type="match status" value="1"/>
</dbReference>
<dbReference type="SUPFAM" id="SSF54565">
    <property type="entry name" value="Ribosomal protein S16"/>
    <property type="match status" value="1"/>
</dbReference>
<dbReference type="PROSITE" id="PS00732">
    <property type="entry name" value="RIBOSOMAL_S16"/>
    <property type="match status" value="1"/>
</dbReference>
<keyword id="KW-1185">Reference proteome</keyword>
<keyword id="KW-0687">Ribonucleoprotein</keyword>
<keyword id="KW-0689">Ribosomal protein</keyword>
<reference key="1">
    <citation type="journal article" date="2008" name="J. Bacteriol.">
        <title>The complete genome sequence of Actinobacillus pleuropneumoniae L20 (serotype 5b).</title>
        <authorList>
            <person name="Foote S.J."/>
            <person name="Bosse J.T."/>
            <person name="Bouevitch A.B."/>
            <person name="Langford P.R."/>
            <person name="Young N.M."/>
            <person name="Nash J.H.E."/>
        </authorList>
    </citation>
    <scope>NUCLEOTIDE SEQUENCE [LARGE SCALE GENOMIC DNA]</scope>
    <source>
        <strain>L20</strain>
    </source>
</reference>
<evidence type="ECO:0000255" key="1">
    <source>
        <dbReference type="HAMAP-Rule" id="MF_00385"/>
    </source>
</evidence>
<evidence type="ECO:0000305" key="2"/>
<accession>A3N384</accession>
<feature type="chain" id="PRO_1000049206" description="Small ribosomal subunit protein bS16">
    <location>
        <begin position="1"/>
        <end position="82"/>
    </location>
</feature>
<gene>
    <name evidence="1" type="primary">rpsP</name>
    <name type="ordered locus">APL_1786</name>
</gene>
<sequence>MVTIRLTRGGAKKRPFYQIVVADSRSPRDGRFIERIGFFNPLAAGQAERLRLDVAKVDAWVAKGADLSDRVASLVKEARKAA</sequence>
<proteinExistence type="inferred from homology"/>